<comment type="catalytic activity">
    <reaction evidence="1">
        <text>tRNA(Leu) + L-leucine + ATP = L-leucyl-tRNA(Leu) + AMP + diphosphate</text>
        <dbReference type="Rhea" id="RHEA:11688"/>
        <dbReference type="Rhea" id="RHEA-COMP:9613"/>
        <dbReference type="Rhea" id="RHEA-COMP:9622"/>
        <dbReference type="ChEBI" id="CHEBI:30616"/>
        <dbReference type="ChEBI" id="CHEBI:33019"/>
        <dbReference type="ChEBI" id="CHEBI:57427"/>
        <dbReference type="ChEBI" id="CHEBI:78442"/>
        <dbReference type="ChEBI" id="CHEBI:78494"/>
        <dbReference type="ChEBI" id="CHEBI:456215"/>
        <dbReference type="EC" id="6.1.1.4"/>
    </reaction>
</comment>
<comment type="subcellular location">
    <subcellularLocation>
        <location evidence="1">Cytoplasm</location>
    </subcellularLocation>
</comment>
<comment type="similarity">
    <text evidence="1">Belongs to the class-I aminoacyl-tRNA synthetase family.</text>
</comment>
<name>SYL_THEAC</name>
<accession>Q9HK31</accession>
<reference key="1">
    <citation type="journal article" date="2000" name="Nature">
        <title>The genome sequence of the thermoacidophilic scavenger Thermoplasma acidophilum.</title>
        <authorList>
            <person name="Ruepp A."/>
            <person name="Graml W."/>
            <person name="Santos-Martinez M.-L."/>
            <person name="Koretke K.K."/>
            <person name="Volker C."/>
            <person name="Mewes H.-W."/>
            <person name="Frishman D."/>
            <person name="Stocker S."/>
            <person name="Lupas A.N."/>
            <person name="Baumeister W."/>
        </authorList>
    </citation>
    <scope>NUCLEOTIDE SEQUENCE [LARGE SCALE GENOMIC DNA]</scope>
    <source>
        <strain>ATCC 25905 / DSM 1728 / JCM 9062 / NBRC 15155 / AMRC-C165</strain>
    </source>
</reference>
<organism>
    <name type="scientific">Thermoplasma acidophilum (strain ATCC 25905 / DSM 1728 / JCM 9062 / NBRC 15155 / AMRC-C165)</name>
    <dbReference type="NCBI Taxonomy" id="273075"/>
    <lineage>
        <taxon>Archaea</taxon>
        <taxon>Methanobacteriati</taxon>
        <taxon>Thermoplasmatota</taxon>
        <taxon>Thermoplasmata</taxon>
        <taxon>Thermoplasmatales</taxon>
        <taxon>Thermoplasmataceae</taxon>
        <taxon>Thermoplasma</taxon>
    </lineage>
</organism>
<keyword id="KW-0030">Aminoacyl-tRNA synthetase</keyword>
<keyword id="KW-0067">ATP-binding</keyword>
<keyword id="KW-0963">Cytoplasm</keyword>
<keyword id="KW-0436">Ligase</keyword>
<keyword id="KW-0547">Nucleotide-binding</keyword>
<keyword id="KW-0648">Protein biosynthesis</keyword>
<keyword id="KW-1185">Reference proteome</keyword>
<sequence>MDDRGRRCCTHSGVIALDIEAKWQNAWDRDGIFVPKMDGRKKFMITVPWPYTNGSLHVGHGRTYTLGDIIARYKRSRNYNVLFPMGFHQSGTPILAFSERIRAGDRSTIDLYTSYLKEYGEKDIDALIESFKDPKNIADYFSNAIINDFKHLGYSIDWTRRFTSADEFYQKFVQWQFRRLNEKGLVKQGRYPILYSLEDDNAVGEDDIKDGDTDKVTIEEYTAIFFRGKSFDLIAASLRPETIYGITNIWVNPDVKYVKVKISGRMAVVSEECSTKLKFQGNEIEVAGEASVQEIQKQTYTTPAGKEVKVYQADFVDPDNGTGIVYSVPSHSVYDYVYYRKKRGKDFPVIIEAPMKMKDIESKYDLETEEGREEATKDLYRNEFYYGKLVDSGPYTGMTVREAREAVKRDLISSGNAFTFYETSRHAVTRSGSKVIVAVLPDQWFLDYSQPWLKDLGHTMINTMTMHPEVYRNVMNDAIDWLKERPCARRRGLGTRLPFDDRWVIESLSDSTIYPAVYTNSIPLRSLYETGKLDDDAITRIFMNGEPKNEDESEAKRQFEYWYPVDIRLTAIPHISNHLSFYVLNHAAIFPKEKWPAGLIISGLVVSNGAKISKSKGNVVSLLEIAKKYSADIYRLYVAVQADISSTMDWNETDLASITRRFNEFKDLMAGFKQDTSDLTFEEAWFVARFSVRLRQFMESMDRYQIRDAYINIFYGVLNDLRYLSSRGGDVNRALTPVIADWLRALMPVIPHHAEEYWHSYVSDTYVSVDPFDENFQDRYERTVRRFGMTCDQMYSAMDYVEKVLQDVKNIMQVTGIEPKSVEITVANADVVRAAQEFLNNSVSGQSKKYMQYLAKRRKDIMIYGFDEYDVLQRNQVYLSKQIGCPVRIERGDVINGKIALPGKPVIYIS</sequence>
<feature type="chain" id="PRO_0000152148" description="Leucine--tRNA ligase">
    <location>
        <begin position="1"/>
        <end position="910"/>
    </location>
</feature>
<feature type="short sequence motif" description="'HIGH' region">
    <location>
        <begin position="50"/>
        <end position="60"/>
    </location>
</feature>
<feature type="short sequence motif" description="'KMSKS' region">
    <location>
        <begin position="611"/>
        <end position="615"/>
    </location>
</feature>
<feature type="binding site" evidence="1">
    <location>
        <position position="614"/>
    </location>
    <ligand>
        <name>ATP</name>
        <dbReference type="ChEBI" id="CHEBI:30616"/>
    </ligand>
</feature>
<gene>
    <name evidence="1" type="primary">leuS</name>
    <name type="ordered locus">Ta0777</name>
</gene>
<protein>
    <recommendedName>
        <fullName evidence="1">Leucine--tRNA ligase</fullName>
        <ecNumber evidence="1">6.1.1.4</ecNumber>
    </recommendedName>
    <alternativeName>
        <fullName evidence="1">Leucyl-tRNA synthetase</fullName>
        <shortName evidence="1">LeuRS</shortName>
    </alternativeName>
</protein>
<evidence type="ECO:0000255" key="1">
    <source>
        <dbReference type="HAMAP-Rule" id="MF_00049"/>
    </source>
</evidence>
<proteinExistence type="inferred from homology"/>
<dbReference type="EC" id="6.1.1.4" evidence="1"/>
<dbReference type="EMBL" id="AL445065">
    <property type="protein sequence ID" value="CAC11908.1"/>
    <property type="molecule type" value="Genomic_DNA"/>
</dbReference>
<dbReference type="SMR" id="Q9HK31"/>
<dbReference type="FunCoup" id="Q9HK31">
    <property type="interactions" value="204"/>
</dbReference>
<dbReference type="STRING" id="273075.gene:9571990"/>
<dbReference type="PaxDb" id="273075-Ta0777"/>
<dbReference type="EnsemblBacteria" id="CAC11908">
    <property type="protein sequence ID" value="CAC11908"/>
    <property type="gene ID" value="CAC11908"/>
</dbReference>
<dbReference type="KEGG" id="tac:Ta0777"/>
<dbReference type="eggNOG" id="arCOG00809">
    <property type="taxonomic scope" value="Archaea"/>
</dbReference>
<dbReference type="HOGENOM" id="CLU_004174_0_0_2"/>
<dbReference type="InParanoid" id="Q9HK31"/>
<dbReference type="OrthoDB" id="23906at2157"/>
<dbReference type="Proteomes" id="UP000001024">
    <property type="component" value="Chromosome"/>
</dbReference>
<dbReference type="GO" id="GO:0005737">
    <property type="term" value="C:cytoplasm"/>
    <property type="evidence" value="ECO:0007669"/>
    <property type="project" value="UniProtKB-SubCell"/>
</dbReference>
<dbReference type="GO" id="GO:0002161">
    <property type="term" value="F:aminoacyl-tRNA deacylase activity"/>
    <property type="evidence" value="ECO:0007669"/>
    <property type="project" value="InterPro"/>
</dbReference>
<dbReference type="GO" id="GO:0005524">
    <property type="term" value="F:ATP binding"/>
    <property type="evidence" value="ECO:0007669"/>
    <property type="project" value="UniProtKB-UniRule"/>
</dbReference>
<dbReference type="GO" id="GO:0004823">
    <property type="term" value="F:leucine-tRNA ligase activity"/>
    <property type="evidence" value="ECO:0007669"/>
    <property type="project" value="UniProtKB-UniRule"/>
</dbReference>
<dbReference type="GO" id="GO:0006429">
    <property type="term" value="P:leucyl-tRNA aminoacylation"/>
    <property type="evidence" value="ECO:0007669"/>
    <property type="project" value="UniProtKB-UniRule"/>
</dbReference>
<dbReference type="Gene3D" id="3.30.2320.20">
    <property type="entry name" value="Class I aminoacyl-tRNA synthetases (RS)"/>
    <property type="match status" value="1"/>
</dbReference>
<dbReference type="Gene3D" id="3.40.50.620">
    <property type="entry name" value="HUPs"/>
    <property type="match status" value="1"/>
</dbReference>
<dbReference type="Gene3D" id="1.10.730.10">
    <property type="entry name" value="Isoleucyl-tRNA Synthetase, Domain 1"/>
    <property type="match status" value="1"/>
</dbReference>
<dbReference type="Gene3D" id="1.10.10.720">
    <property type="entry name" value="leucyl-tRNA synthetase"/>
    <property type="match status" value="1"/>
</dbReference>
<dbReference type="Gene3D" id="3.90.740.10">
    <property type="entry name" value="Valyl/Leucyl/Isoleucyl-tRNA synthetase, editing domain"/>
    <property type="match status" value="1"/>
</dbReference>
<dbReference type="HAMAP" id="MF_00049_A">
    <property type="entry name" value="Leu_tRNA_synth_A"/>
    <property type="match status" value="1"/>
</dbReference>
<dbReference type="InterPro" id="IPR001412">
    <property type="entry name" value="aa-tRNA-synth_I_CS"/>
</dbReference>
<dbReference type="InterPro" id="IPR002300">
    <property type="entry name" value="aa-tRNA-synth_Ia"/>
</dbReference>
<dbReference type="InterPro" id="IPR020791">
    <property type="entry name" value="Leu-tRNA-lgase_arc"/>
</dbReference>
<dbReference type="InterPro" id="IPR004493">
    <property type="entry name" value="Leu-tRNA-synth_Ia_arc/euk"/>
</dbReference>
<dbReference type="InterPro" id="IPR013155">
    <property type="entry name" value="M/V/L/I-tRNA-synth_anticd-bd"/>
</dbReference>
<dbReference type="InterPro" id="IPR014729">
    <property type="entry name" value="Rossmann-like_a/b/a_fold"/>
</dbReference>
<dbReference type="InterPro" id="IPR009080">
    <property type="entry name" value="tRNAsynth_Ia_anticodon-bd"/>
</dbReference>
<dbReference type="InterPro" id="IPR009008">
    <property type="entry name" value="Val/Leu/Ile-tRNA-synth_edit"/>
</dbReference>
<dbReference type="NCBIfam" id="TIGR00395">
    <property type="entry name" value="leuS_arch"/>
    <property type="match status" value="1"/>
</dbReference>
<dbReference type="NCBIfam" id="NF008957">
    <property type="entry name" value="PRK12300.1"/>
    <property type="match status" value="1"/>
</dbReference>
<dbReference type="PANTHER" id="PTHR45794:SF1">
    <property type="entry name" value="LEUCINE--TRNA LIGASE, CYTOPLASMIC"/>
    <property type="match status" value="1"/>
</dbReference>
<dbReference type="PANTHER" id="PTHR45794">
    <property type="entry name" value="LEUCYL-TRNA SYNTHETASE"/>
    <property type="match status" value="1"/>
</dbReference>
<dbReference type="Pfam" id="PF08264">
    <property type="entry name" value="Anticodon_1"/>
    <property type="match status" value="1"/>
</dbReference>
<dbReference type="Pfam" id="PF00133">
    <property type="entry name" value="tRNA-synt_1"/>
    <property type="match status" value="2"/>
</dbReference>
<dbReference type="SUPFAM" id="SSF47323">
    <property type="entry name" value="Anticodon-binding domain of a subclass of class I aminoacyl-tRNA synthetases"/>
    <property type="match status" value="1"/>
</dbReference>
<dbReference type="SUPFAM" id="SSF52374">
    <property type="entry name" value="Nucleotidylyl transferase"/>
    <property type="match status" value="1"/>
</dbReference>
<dbReference type="SUPFAM" id="SSF50677">
    <property type="entry name" value="ValRS/IleRS/LeuRS editing domain"/>
    <property type="match status" value="1"/>
</dbReference>
<dbReference type="PROSITE" id="PS00178">
    <property type="entry name" value="AA_TRNA_LIGASE_I"/>
    <property type="match status" value="1"/>
</dbReference>